<keyword id="KW-0067">ATP-binding</keyword>
<keyword id="KW-0436">Ligase</keyword>
<keyword id="KW-0547">Nucleotide-binding</keyword>
<keyword id="KW-0648">Protein biosynthesis</keyword>
<keyword id="KW-1185">Reference proteome</keyword>
<comment type="function">
    <text evidence="1">Allows the formation of correctly charged Asn-tRNA(Asn) or Gln-tRNA(Gln) through the transamidation of misacylated Asp-tRNA(Asn) or Glu-tRNA(Gln) in organisms which lack either or both of asparaginyl-tRNA or glutaminyl-tRNA synthetases. The reaction takes place in the presence of glutamine and ATP through an activated phospho-Asp-tRNA(Asn) or phospho-Glu-tRNA(Gln) (By similarity).</text>
</comment>
<comment type="catalytic activity">
    <reaction>
        <text>L-glutamyl-tRNA(Gln) + L-glutamine + ATP + H2O = L-glutaminyl-tRNA(Gln) + L-glutamate + ADP + phosphate + H(+)</text>
        <dbReference type="Rhea" id="RHEA:17521"/>
        <dbReference type="Rhea" id="RHEA-COMP:9681"/>
        <dbReference type="Rhea" id="RHEA-COMP:9684"/>
        <dbReference type="ChEBI" id="CHEBI:15377"/>
        <dbReference type="ChEBI" id="CHEBI:15378"/>
        <dbReference type="ChEBI" id="CHEBI:29985"/>
        <dbReference type="ChEBI" id="CHEBI:30616"/>
        <dbReference type="ChEBI" id="CHEBI:43474"/>
        <dbReference type="ChEBI" id="CHEBI:58359"/>
        <dbReference type="ChEBI" id="CHEBI:78520"/>
        <dbReference type="ChEBI" id="CHEBI:78521"/>
        <dbReference type="ChEBI" id="CHEBI:456216"/>
    </reaction>
</comment>
<comment type="catalytic activity">
    <reaction>
        <text>L-aspartyl-tRNA(Asn) + L-glutamine + ATP + H2O = L-asparaginyl-tRNA(Asn) + L-glutamate + ADP + phosphate + 2 H(+)</text>
        <dbReference type="Rhea" id="RHEA:14513"/>
        <dbReference type="Rhea" id="RHEA-COMP:9674"/>
        <dbReference type="Rhea" id="RHEA-COMP:9677"/>
        <dbReference type="ChEBI" id="CHEBI:15377"/>
        <dbReference type="ChEBI" id="CHEBI:15378"/>
        <dbReference type="ChEBI" id="CHEBI:29985"/>
        <dbReference type="ChEBI" id="CHEBI:30616"/>
        <dbReference type="ChEBI" id="CHEBI:43474"/>
        <dbReference type="ChEBI" id="CHEBI:58359"/>
        <dbReference type="ChEBI" id="CHEBI:78515"/>
        <dbReference type="ChEBI" id="CHEBI:78516"/>
        <dbReference type="ChEBI" id="CHEBI:456216"/>
    </reaction>
</comment>
<comment type="subunit">
    <text evidence="1">Heterotrimer of A, B and C subunits.</text>
</comment>
<comment type="similarity">
    <text evidence="2">Belongs to the GatB/GatE family. GatB subfamily.</text>
</comment>
<comment type="sequence caution" evidence="2">
    <conflict type="erroneous initiation">
        <sequence resource="EMBL-CDS" id="AAD07723"/>
    </conflict>
</comment>
<protein>
    <recommendedName>
        <fullName>Aspartyl/glutamyl-tRNA(Asn/Gln) amidotransferase subunit B</fullName>
        <shortName>Asp/Glu-ADT subunit B</shortName>
        <ecNumber>6.3.5.-</ecNumber>
    </recommendedName>
</protein>
<evidence type="ECO:0000250" key="1"/>
<evidence type="ECO:0000305" key="2"/>
<gene>
    <name type="primary">gatB</name>
    <name type="ordered locus">HP_0658</name>
</gene>
<proteinExistence type="inferred from homology"/>
<feature type="chain" id="PRO_0000148794" description="Aspartyl/glutamyl-tRNA(Asn/Gln) amidotransferase subunit B">
    <location>
        <begin position="1"/>
        <end position="474"/>
    </location>
</feature>
<reference key="1">
    <citation type="journal article" date="1997" name="Nature">
        <title>The complete genome sequence of the gastric pathogen Helicobacter pylori.</title>
        <authorList>
            <person name="Tomb J.-F."/>
            <person name="White O."/>
            <person name="Kerlavage A.R."/>
            <person name="Clayton R.A."/>
            <person name="Sutton G.G."/>
            <person name="Fleischmann R.D."/>
            <person name="Ketchum K.A."/>
            <person name="Klenk H.-P."/>
            <person name="Gill S.R."/>
            <person name="Dougherty B.A."/>
            <person name="Nelson K.E."/>
            <person name="Quackenbush J."/>
            <person name="Zhou L."/>
            <person name="Kirkness E.F."/>
            <person name="Peterson S.N."/>
            <person name="Loftus B.J."/>
            <person name="Richardson D.L."/>
            <person name="Dodson R.J."/>
            <person name="Khalak H.G."/>
            <person name="Glodek A."/>
            <person name="McKenney K."/>
            <person name="FitzGerald L.M."/>
            <person name="Lee N."/>
            <person name="Adams M.D."/>
            <person name="Hickey E.K."/>
            <person name="Berg D.E."/>
            <person name="Gocayne J.D."/>
            <person name="Utterback T.R."/>
            <person name="Peterson J.D."/>
            <person name="Kelley J.M."/>
            <person name="Cotton M.D."/>
            <person name="Weidman J.F."/>
            <person name="Fujii C."/>
            <person name="Bowman C."/>
            <person name="Watthey L."/>
            <person name="Wallin E."/>
            <person name="Hayes W.S."/>
            <person name="Borodovsky M."/>
            <person name="Karp P.D."/>
            <person name="Smith H.O."/>
            <person name="Fraser C.M."/>
            <person name="Venter J.C."/>
        </authorList>
    </citation>
    <scope>NUCLEOTIDE SEQUENCE [LARGE SCALE GENOMIC DNA]</scope>
    <source>
        <strain>ATCC 700392 / 26695</strain>
    </source>
</reference>
<dbReference type="EC" id="6.3.5.-"/>
<dbReference type="EMBL" id="AE000511">
    <property type="protein sequence ID" value="AAD07723.1"/>
    <property type="status" value="ALT_INIT"/>
    <property type="molecule type" value="Genomic_DNA"/>
</dbReference>
<dbReference type="PIR" id="B64602">
    <property type="entry name" value="B64602"/>
</dbReference>
<dbReference type="RefSeq" id="NP_207452.1">
    <property type="nucleotide sequence ID" value="NC_000915.1"/>
</dbReference>
<dbReference type="RefSeq" id="WP_001862637.1">
    <property type="nucleotide sequence ID" value="NC_018939.1"/>
</dbReference>
<dbReference type="SMR" id="O25372"/>
<dbReference type="IntAct" id="O25372">
    <property type="interactions" value="1"/>
</dbReference>
<dbReference type="MINT" id="O25372"/>
<dbReference type="STRING" id="85962.HP_0658"/>
<dbReference type="PaxDb" id="85962-C694_03405"/>
<dbReference type="EnsemblBacteria" id="AAD07723">
    <property type="protein sequence ID" value="AAD07723"/>
    <property type="gene ID" value="HP_0658"/>
</dbReference>
<dbReference type="KEGG" id="heo:C694_03405"/>
<dbReference type="KEGG" id="hpy:HP_0658"/>
<dbReference type="PATRIC" id="fig|85962.47.peg.708"/>
<dbReference type="eggNOG" id="COG0064">
    <property type="taxonomic scope" value="Bacteria"/>
</dbReference>
<dbReference type="InParanoid" id="O25372"/>
<dbReference type="OrthoDB" id="9804078at2"/>
<dbReference type="PhylomeDB" id="O25372"/>
<dbReference type="Proteomes" id="UP000000429">
    <property type="component" value="Chromosome"/>
</dbReference>
<dbReference type="GO" id="GO:0050566">
    <property type="term" value="F:asparaginyl-tRNA synthase (glutamine-hydrolyzing) activity"/>
    <property type="evidence" value="ECO:0007669"/>
    <property type="project" value="RHEA"/>
</dbReference>
<dbReference type="GO" id="GO:0005524">
    <property type="term" value="F:ATP binding"/>
    <property type="evidence" value="ECO:0007669"/>
    <property type="project" value="UniProtKB-KW"/>
</dbReference>
<dbReference type="GO" id="GO:0050567">
    <property type="term" value="F:glutaminyl-tRNA synthase (glutamine-hydrolyzing) activity"/>
    <property type="evidence" value="ECO:0000318"/>
    <property type="project" value="GO_Central"/>
</dbReference>
<dbReference type="GO" id="GO:0070681">
    <property type="term" value="P:glutaminyl-tRNAGln biosynthesis via transamidation"/>
    <property type="evidence" value="ECO:0000318"/>
    <property type="project" value="GO_Central"/>
</dbReference>
<dbReference type="GO" id="GO:0006412">
    <property type="term" value="P:translation"/>
    <property type="evidence" value="ECO:0007669"/>
    <property type="project" value="UniProtKB-UniRule"/>
</dbReference>
<dbReference type="FunFam" id="1.10.10.410:FF:000001">
    <property type="entry name" value="Aspartyl/glutamyl-tRNA(Asn/Gln) amidotransferase subunit B"/>
    <property type="match status" value="1"/>
</dbReference>
<dbReference type="Gene3D" id="1.10.10.410">
    <property type="match status" value="1"/>
</dbReference>
<dbReference type="Gene3D" id="1.10.150.380">
    <property type="entry name" value="GatB domain, N-terminal subdomain"/>
    <property type="match status" value="1"/>
</dbReference>
<dbReference type="HAMAP" id="MF_00121">
    <property type="entry name" value="GatB"/>
    <property type="match status" value="1"/>
</dbReference>
<dbReference type="InterPro" id="IPR017959">
    <property type="entry name" value="Asn/Gln-tRNA_amidoTrfase_suB/E"/>
</dbReference>
<dbReference type="InterPro" id="IPR006075">
    <property type="entry name" value="Asn/Gln-tRNA_Trfase_suB/E_cat"/>
</dbReference>
<dbReference type="InterPro" id="IPR018027">
    <property type="entry name" value="Asn/Gln_amidotransferase"/>
</dbReference>
<dbReference type="InterPro" id="IPR003789">
    <property type="entry name" value="Asn/Gln_tRNA_amidoTrase-B-like"/>
</dbReference>
<dbReference type="InterPro" id="IPR004413">
    <property type="entry name" value="GatB"/>
</dbReference>
<dbReference type="InterPro" id="IPR042114">
    <property type="entry name" value="GatB_C_1"/>
</dbReference>
<dbReference type="InterPro" id="IPR023168">
    <property type="entry name" value="GatB_Yqey_C_2"/>
</dbReference>
<dbReference type="InterPro" id="IPR017958">
    <property type="entry name" value="Gln-tRNA_amidoTrfase_suB_CS"/>
</dbReference>
<dbReference type="InterPro" id="IPR014746">
    <property type="entry name" value="Gln_synth/guanido_kin_cat_dom"/>
</dbReference>
<dbReference type="NCBIfam" id="TIGR00133">
    <property type="entry name" value="gatB"/>
    <property type="match status" value="1"/>
</dbReference>
<dbReference type="NCBIfam" id="NF004012">
    <property type="entry name" value="PRK05477.1-2"/>
    <property type="match status" value="1"/>
</dbReference>
<dbReference type="NCBIfam" id="NF004014">
    <property type="entry name" value="PRK05477.1-4"/>
    <property type="match status" value="1"/>
</dbReference>
<dbReference type="PANTHER" id="PTHR11659">
    <property type="entry name" value="GLUTAMYL-TRNA GLN AMIDOTRANSFERASE SUBUNIT B MITOCHONDRIAL AND PROKARYOTIC PET112-RELATED"/>
    <property type="match status" value="1"/>
</dbReference>
<dbReference type="PANTHER" id="PTHR11659:SF0">
    <property type="entry name" value="GLUTAMYL-TRNA(GLN) AMIDOTRANSFERASE SUBUNIT B, MITOCHONDRIAL"/>
    <property type="match status" value="1"/>
</dbReference>
<dbReference type="Pfam" id="PF02934">
    <property type="entry name" value="GatB_N"/>
    <property type="match status" value="1"/>
</dbReference>
<dbReference type="Pfam" id="PF02637">
    <property type="entry name" value="GatB_Yqey"/>
    <property type="match status" value="1"/>
</dbReference>
<dbReference type="SMART" id="SM00845">
    <property type="entry name" value="GatB_Yqey"/>
    <property type="match status" value="1"/>
</dbReference>
<dbReference type="SUPFAM" id="SSF89095">
    <property type="entry name" value="GatB/YqeY motif"/>
    <property type="match status" value="1"/>
</dbReference>
<dbReference type="SUPFAM" id="SSF55931">
    <property type="entry name" value="Glutamine synthetase/guanido kinase"/>
    <property type="match status" value="1"/>
</dbReference>
<dbReference type="PROSITE" id="PS01234">
    <property type="entry name" value="GATB"/>
    <property type="match status" value="1"/>
</dbReference>
<sequence length="474" mass="53157">MPFEAVIGLEVHVQLNTKTKIFCSCSTSFGESPNSNTCPVCLGLPGALPVLNKEVVKKAIQLGTAIEANINQYSIFARKNYFYPDLPKAYQISQFEVPIVSDGKLEIDTKEGAKIVRIERAHMEEDAGKNIHEGSYSLVDLNRACTPLLEIVSKPDMRNSEEAIAYLKKLHAIVRFIGISDANMQEGNFRCDANVSIRPKGDEKLYTRVEIKNLNSFRFIAKAIEYEIERQSAAWENGRYNEEVVQETRLFDTHKGITLSMRNKEESADYRYFKDPDLYPVFIDEKLLKEAQKINELPSAKKIRYMKDFNLKEDDANLLVSDPLLAQYFESMLHLGVKAKTSVTWLCVELLGRLKAEITLENCGVSTHMLGALAKRIDEGKISGKSAKDVLDKLLEEQGGDVDALIEQMGLSQVNDTEAIVKVIEEVLKNNADKVLEYKSGKDKLFGFFVGQAMKNLKGANPSVVNAILKEKLG</sequence>
<name>GATB_HELPY</name>
<accession>O25372</accession>
<organism>
    <name type="scientific">Helicobacter pylori (strain ATCC 700392 / 26695)</name>
    <name type="common">Campylobacter pylori</name>
    <dbReference type="NCBI Taxonomy" id="85962"/>
    <lineage>
        <taxon>Bacteria</taxon>
        <taxon>Pseudomonadati</taxon>
        <taxon>Campylobacterota</taxon>
        <taxon>Epsilonproteobacteria</taxon>
        <taxon>Campylobacterales</taxon>
        <taxon>Helicobacteraceae</taxon>
        <taxon>Helicobacter</taxon>
    </lineage>
</organism>